<protein>
    <recommendedName>
        <fullName evidence="1">GTPase Der</fullName>
    </recommendedName>
    <alternativeName>
        <fullName evidence="1">GTP-binding protein EngA</fullName>
    </alternativeName>
</protein>
<accession>Q9PQA7</accession>
<name>DER_UREPA</name>
<sequence>MRTIAIVGKPNVGKSSLFNRILMRRKSIVDDQPGVTRDRIYDIGNWLTRSFMLIDTGGIISSKDTYQDNINEQVLFAINEANTIIFLVSAKDGINNDDKKIAKMLKEKAKDKKIILVINKIESEKYYLNEGELYSFGFGKFFKISAEHGIGMGDLLDELVKDMPIQNNLEKQERFKFCIIGRPNVGKSSLTNTILGEQRVIVNAEAGSTRDSIDNDFNYYNKKYTIIDTAGIRRKGKIVESVEKYAVLRTKKAIERSQLILLVLDGSEPFKEQDEVVGGLAYNANIPTIIIVNKWDNIINKNSHTMEMVKKQIRSQFKYLSWAPIVFVSALDNKRIHTIFEAIEFVREQAMRKIATSLLNDVVIKANAFQEPPPFKGGRISISYIVQVQSQIPTFVLKCNNPKFLHFSYARYIENEIRKAFGFDSVPITLYWQDKNKKLRGE</sequence>
<keyword id="KW-0342">GTP-binding</keyword>
<keyword id="KW-0547">Nucleotide-binding</keyword>
<keyword id="KW-1185">Reference proteome</keyword>
<keyword id="KW-0677">Repeat</keyword>
<keyword id="KW-0690">Ribosome biogenesis</keyword>
<evidence type="ECO:0000255" key="1">
    <source>
        <dbReference type="HAMAP-Rule" id="MF_00195"/>
    </source>
</evidence>
<gene>
    <name evidence="1" type="primary">der</name>
    <name type="synonym">engA</name>
    <name type="ordered locus">UU383</name>
</gene>
<comment type="function">
    <text evidence="1">GTPase that plays an essential role in the late steps of ribosome biogenesis.</text>
</comment>
<comment type="subunit">
    <text evidence="1">Associates with the 50S ribosomal subunit.</text>
</comment>
<comment type="similarity">
    <text evidence="1">Belongs to the TRAFAC class TrmE-Era-EngA-EngB-Septin-like GTPase superfamily. EngA (Der) GTPase family.</text>
</comment>
<proteinExistence type="inferred from homology"/>
<dbReference type="EMBL" id="AF222894">
    <property type="protein sequence ID" value="AAF30793.1"/>
    <property type="molecule type" value="Genomic_DNA"/>
</dbReference>
<dbReference type="RefSeq" id="WP_006688696.1">
    <property type="nucleotide sequence ID" value="NC_002162.1"/>
</dbReference>
<dbReference type="SMR" id="Q9PQA7"/>
<dbReference type="STRING" id="273119.UU383"/>
<dbReference type="EnsemblBacteria" id="AAF30793">
    <property type="protein sequence ID" value="AAF30793"/>
    <property type="gene ID" value="UU383"/>
</dbReference>
<dbReference type="GeneID" id="29672164"/>
<dbReference type="KEGG" id="uur:UU383"/>
<dbReference type="eggNOG" id="COG1160">
    <property type="taxonomic scope" value="Bacteria"/>
</dbReference>
<dbReference type="HOGENOM" id="CLU_016077_6_2_14"/>
<dbReference type="OrthoDB" id="9805918at2"/>
<dbReference type="Proteomes" id="UP000000423">
    <property type="component" value="Chromosome"/>
</dbReference>
<dbReference type="GO" id="GO:0005525">
    <property type="term" value="F:GTP binding"/>
    <property type="evidence" value="ECO:0007669"/>
    <property type="project" value="UniProtKB-UniRule"/>
</dbReference>
<dbReference type="GO" id="GO:0043022">
    <property type="term" value="F:ribosome binding"/>
    <property type="evidence" value="ECO:0007669"/>
    <property type="project" value="TreeGrafter"/>
</dbReference>
<dbReference type="GO" id="GO:0042254">
    <property type="term" value="P:ribosome biogenesis"/>
    <property type="evidence" value="ECO:0007669"/>
    <property type="project" value="UniProtKB-KW"/>
</dbReference>
<dbReference type="CDD" id="cd01894">
    <property type="entry name" value="EngA1"/>
    <property type="match status" value="1"/>
</dbReference>
<dbReference type="CDD" id="cd01895">
    <property type="entry name" value="EngA2"/>
    <property type="match status" value="1"/>
</dbReference>
<dbReference type="FunFam" id="3.30.300.20:FF:000004">
    <property type="entry name" value="GTPase Der"/>
    <property type="match status" value="1"/>
</dbReference>
<dbReference type="FunFam" id="3.40.50.300:FF:000040">
    <property type="entry name" value="GTPase Der"/>
    <property type="match status" value="1"/>
</dbReference>
<dbReference type="FunFam" id="3.40.50.300:FF:000057">
    <property type="entry name" value="GTPase Der"/>
    <property type="match status" value="1"/>
</dbReference>
<dbReference type="Gene3D" id="3.30.300.20">
    <property type="match status" value="1"/>
</dbReference>
<dbReference type="Gene3D" id="3.40.50.300">
    <property type="entry name" value="P-loop containing nucleotide triphosphate hydrolases"/>
    <property type="match status" value="2"/>
</dbReference>
<dbReference type="HAMAP" id="MF_00195">
    <property type="entry name" value="GTPase_Der"/>
    <property type="match status" value="1"/>
</dbReference>
<dbReference type="InterPro" id="IPR031166">
    <property type="entry name" value="G_ENGA"/>
</dbReference>
<dbReference type="InterPro" id="IPR006073">
    <property type="entry name" value="GTP-bd"/>
</dbReference>
<dbReference type="InterPro" id="IPR016484">
    <property type="entry name" value="GTPase_Der"/>
</dbReference>
<dbReference type="InterPro" id="IPR032859">
    <property type="entry name" value="KH_dom-like"/>
</dbReference>
<dbReference type="InterPro" id="IPR015946">
    <property type="entry name" value="KH_dom-like_a/b"/>
</dbReference>
<dbReference type="InterPro" id="IPR027417">
    <property type="entry name" value="P-loop_NTPase"/>
</dbReference>
<dbReference type="InterPro" id="IPR005225">
    <property type="entry name" value="Small_GTP-bd"/>
</dbReference>
<dbReference type="NCBIfam" id="TIGR03594">
    <property type="entry name" value="GTPase_EngA"/>
    <property type="match status" value="1"/>
</dbReference>
<dbReference type="NCBIfam" id="TIGR00231">
    <property type="entry name" value="small_GTP"/>
    <property type="match status" value="2"/>
</dbReference>
<dbReference type="PANTHER" id="PTHR43834">
    <property type="entry name" value="GTPASE DER"/>
    <property type="match status" value="1"/>
</dbReference>
<dbReference type="PANTHER" id="PTHR43834:SF6">
    <property type="entry name" value="GTPASE DER"/>
    <property type="match status" value="1"/>
</dbReference>
<dbReference type="Pfam" id="PF14714">
    <property type="entry name" value="KH_dom-like"/>
    <property type="match status" value="1"/>
</dbReference>
<dbReference type="Pfam" id="PF01926">
    <property type="entry name" value="MMR_HSR1"/>
    <property type="match status" value="2"/>
</dbReference>
<dbReference type="PIRSF" id="PIRSF006485">
    <property type="entry name" value="GTP-binding_EngA"/>
    <property type="match status" value="1"/>
</dbReference>
<dbReference type="PRINTS" id="PR00326">
    <property type="entry name" value="GTP1OBG"/>
</dbReference>
<dbReference type="SUPFAM" id="SSF52540">
    <property type="entry name" value="P-loop containing nucleoside triphosphate hydrolases"/>
    <property type="match status" value="2"/>
</dbReference>
<dbReference type="PROSITE" id="PS51712">
    <property type="entry name" value="G_ENGA"/>
    <property type="match status" value="2"/>
</dbReference>
<organism>
    <name type="scientific">Ureaplasma parvum serovar 3 (strain ATCC 700970)</name>
    <dbReference type="NCBI Taxonomy" id="273119"/>
    <lineage>
        <taxon>Bacteria</taxon>
        <taxon>Bacillati</taxon>
        <taxon>Mycoplasmatota</taxon>
        <taxon>Mycoplasmoidales</taxon>
        <taxon>Mycoplasmoidaceae</taxon>
        <taxon>Ureaplasma</taxon>
    </lineage>
</organism>
<feature type="chain" id="PRO_0000179067" description="GTPase Der">
    <location>
        <begin position="1"/>
        <end position="442"/>
    </location>
</feature>
<feature type="domain" description="EngA-type G 1">
    <location>
        <begin position="2"/>
        <end position="167"/>
    </location>
</feature>
<feature type="domain" description="EngA-type G 2">
    <location>
        <begin position="175"/>
        <end position="351"/>
    </location>
</feature>
<feature type="domain" description="KH-like" evidence="1">
    <location>
        <begin position="352"/>
        <end position="436"/>
    </location>
</feature>
<feature type="binding site" evidence="1">
    <location>
        <begin position="8"/>
        <end position="15"/>
    </location>
    <ligand>
        <name>GTP</name>
        <dbReference type="ChEBI" id="CHEBI:37565"/>
        <label>1</label>
    </ligand>
</feature>
<feature type="binding site" evidence="1">
    <location>
        <begin position="55"/>
        <end position="59"/>
    </location>
    <ligand>
        <name>GTP</name>
        <dbReference type="ChEBI" id="CHEBI:37565"/>
        <label>1</label>
    </ligand>
</feature>
<feature type="binding site" evidence="1">
    <location>
        <begin position="119"/>
        <end position="122"/>
    </location>
    <ligand>
        <name>GTP</name>
        <dbReference type="ChEBI" id="CHEBI:37565"/>
        <label>1</label>
    </ligand>
</feature>
<feature type="binding site" evidence="1">
    <location>
        <begin position="181"/>
        <end position="188"/>
    </location>
    <ligand>
        <name>GTP</name>
        <dbReference type="ChEBI" id="CHEBI:37565"/>
        <label>2</label>
    </ligand>
</feature>
<feature type="binding site" evidence="1">
    <location>
        <begin position="228"/>
        <end position="232"/>
    </location>
    <ligand>
        <name>GTP</name>
        <dbReference type="ChEBI" id="CHEBI:37565"/>
        <label>2</label>
    </ligand>
</feature>
<feature type="binding site" evidence="1">
    <location>
        <begin position="293"/>
        <end position="296"/>
    </location>
    <ligand>
        <name>GTP</name>
        <dbReference type="ChEBI" id="CHEBI:37565"/>
        <label>2</label>
    </ligand>
</feature>
<reference key="1">
    <citation type="journal article" date="2000" name="Nature">
        <title>The complete sequence of the mucosal pathogen Ureaplasma urealyticum.</title>
        <authorList>
            <person name="Glass J.I."/>
            <person name="Lefkowitz E.J."/>
            <person name="Glass J.S."/>
            <person name="Heiner C.R."/>
            <person name="Chen E.Y."/>
            <person name="Cassell G.H."/>
        </authorList>
    </citation>
    <scope>NUCLEOTIDE SEQUENCE [LARGE SCALE GENOMIC DNA]</scope>
    <source>
        <strain>ATCC 700970</strain>
    </source>
</reference>